<proteinExistence type="inferred from homology"/>
<dbReference type="EC" id="6.1.1.14" evidence="1"/>
<dbReference type="EMBL" id="CP000969">
    <property type="protein sequence ID" value="ACB09084.1"/>
    <property type="molecule type" value="Genomic_DNA"/>
</dbReference>
<dbReference type="RefSeq" id="WP_012310709.1">
    <property type="nucleotide sequence ID" value="NC_010483.1"/>
</dbReference>
<dbReference type="SMR" id="B1L9T6"/>
<dbReference type="KEGG" id="trq:TRQ2_0732"/>
<dbReference type="HOGENOM" id="CLU_057066_1_0_0"/>
<dbReference type="Proteomes" id="UP000001687">
    <property type="component" value="Chromosome"/>
</dbReference>
<dbReference type="GO" id="GO:0005829">
    <property type="term" value="C:cytosol"/>
    <property type="evidence" value="ECO:0007669"/>
    <property type="project" value="TreeGrafter"/>
</dbReference>
<dbReference type="GO" id="GO:0005524">
    <property type="term" value="F:ATP binding"/>
    <property type="evidence" value="ECO:0007669"/>
    <property type="project" value="UniProtKB-UniRule"/>
</dbReference>
<dbReference type="GO" id="GO:0004820">
    <property type="term" value="F:glycine-tRNA ligase activity"/>
    <property type="evidence" value="ECO:0007669"/>
    <property type="project" value="UniProtKB-UniRule"/>
</dbReference>
<dbReference type="GO" id="GO:0006426">
    <property type="term" value="P:glycyl-tRNA aminoacylation"/>
    <property type="evidence" value="ECO:0007669"/>
    <property type="project" value="UniProtKB-UniRule"/>
</dbReference>
<dbReference type="CDD" id="cd00733">
    <property type="entry name" value="GlyRS_alpha_core"/>
    <property type="match status" value="1"/>
</dbReference>
<dbReference type="FunFam" id="3.30.930.10:FF:000006">
    <property type="entry name" value="Glycine--tRNA ligase alpha subunit"/>
    <property type="match status" value="1"/>
</dbReference>
<dbReference type="Gene3D" id="3.30.930.10">
    <property type="entry name" value="Bira Bifunctional Protein, Domain 2"/>
    <property type="match status" value="1"/>
</dbReference>
<dbReference type="Gene3D" id="1.20.58.180">
    <property type="entry name" value="Class II aaRS and biotin synthetases, domain 2"/>
    <property type="match status" value="1"/>
</dbReference>
<dbReference type="HAMAP" id="MF_00254">
    <property type="entry name" value="Gly_tRNA_synth_alpha"/>
    <property type="match status" value="1"/>
</dbReference>
<dbReference type="InterPro" id="IPR045864">
    <property type="entry name" value="aa-tRNA-synth_II/BPL/LPL"/>
</dbReference>
<dbReference type="InterPro" id="IPR006194">
    <property type="entry name" value="Gly-tRNA-synth_heterodimer"/>
</dbReference>
<dbReference type="InterPro" id="IPR002310">
    <property type="entry name" value="Gly-tRNA_ligase_asu"/>
</dbReference>
<dbReference type="NCBIfam" id="TIGR00388">
    <property type="entry name" value="glyQ"/>
    <property type="match status" value="1"/>
</dbReference>
<dbReference type="NCBIfam" id="NF006827">
    <property type="entry name" value="PRK09348.1"/>
    <property type="match status" value="1"/>
</dbReference>
<dbReference type="PANTHER" id="PTHR30075:SF2">
    <property type="entry name" value="GLYCINE--TRNA LIGASE, CHLOROPLASTIC_MITOCHONDRIAL 2"/>
    <property type="match status" value="1"/>
</dbReference>
<dbReference type="PANTHER" id="PTHR30075">
    <property type="entry name" value="GLYCYL-TRNA SYNTHETASE"/>
    <property type="match status" value="1"/>
</dbReference>
<dbReference type="Pfam" id="PF02091">
    <property type="entry name" value="tRNA-synt_2e"/>
    <property type="match status" value="1"/>
</dbReference>
<dbReference type="PRINTS" id="PR01044">
    <property type="entry name" value="TRNASYNTHGA"/>
</dbReference>
<dbReference type="SUPFAM" id="SSF55681">
    <property type="entry name" value="Class II aaRS and biotin synthetases"/>
    <property type="match status" value="1"/>
</dbReference>
<dbReference type="PROSITE" id="PS50861">
    <property type="entry name" value="AA_TRNA_LIGASE_II_GLYAB"/>
    <property type="match status" value="1"/>
</dbReference>
<feature type="chain" id="PRO_1000101242" description="Glycine--tRNA ligase alpha subunit">
    <location>
        <begin position="1"/>
        <end position="286"/>
    </location>
</feature>
<organism>
    <name type="scientific">Thermotoga sp. (strain RQ2)</name>
    <dbReference type="NCBI Taxonomy" id="126740"/>
    <lineage>
        <taxon>Bacteria</taxon>
        <taxon>Thermotogati</taxon>
        <taxon>Thermotogota</taxon>
        <taxon>Thermotogae</taxon>
        <taxon>Thermotogales</taxon>
        <taxon>Thermotogaceae</taxon>
        <taxon>Thermotoga</taxon>
    </lineage>
</organism>
<sequence length="286" mass="33568">MYLQDVIMKLNDFWASKGCLLEQPYDMEVGAGTFHPATFFGSLRKGPWKVAYVQPSRRPTDGRYGENPNRLQRYFQYQVIIKPSPENSQELYLESLEYLGINLKEHDIRFVEDNWESPTLGAWGVGWEVWLDGMEITQFTYFQQIGGISLKDIPLEITYGLERIAMYLQGVDNVYEVQWNENVKYGDVFLENEREFSVFNFEEANVGLLFRHFDEYEKEFYRLVEKNLYLPAYDYILKCSHTFNLLDARGAISVSQRQTYVKRIQAMARKVARVFLEVQANENSPA</sequence>
<evidence type="ECO:0000255" key="1">
    <source>
        <dbReference type="HAMAP-Rule" id="MF_00254"/>
    </source>
</evidence>
<protein>
    <recommendedName>
        <fullName evidence="1">Glycine--tRNA ligase alpha subunit</fullName>
        <ecNumber evidence="1">6.1.1.14</ecNumber>
    </recommendedName>
    <alternativeName>
        <fullName evidence="1">Glycyl-tRNA synthetase alpha subunit</fullName>
        <shortName evidence="1">GlyRS</shortName>
    </alternativeName>
</protein>
<keyword id="KW-0030">Aminoacyl-tRNA synthetase</keyword>
<keyword id="KW-0067">ATP-binding</keyword>
<keyword id="KW-0963">Cytoplasm</keyword>
<keyword id="KW-0436">Ligase</keyword>
<keyword id="KW-0547">Nucleotide-binding</keyword>
<keyword id="KW-0648">Protein biosynthesis</keyword>
<name>SYGA_THESQ</name>
<gene>
    <name evidence="1" type="primary">glyQ</name>
    <name type="ordered locus">TRQ2_0732</name>
</gene>
<comment type="catalytic activity">
    <reaction evidence="1">
        <text>tRNA(Gly) + glycine + ATP = glycyl-tRNA(Gly) + AMP + diphosphate</text>
        <dbReference type="Rhea" id="RHEA:16013"/>
        <dbReference type="Rhea" id="RHEA-COMP:9664"/>
        <dbReference type="Rhea" id="RHEA-COMP:9683"/>
        <dbReference type="ChEBI" id="CHEBI:30616"/>
        <dbReference type="ChEBI" id="CHEBI:33019"/>
        <dbReference type="ChEBI" id="CHEBI:57305"/>
        <dbReference type="ChEBI" id="CHEBI:78442"/>
        <dbReference type="ChEBI" id="CHEBI:78522"/>
        <dbReference type="ChEBI" id="CHEBI:456215"/>
        <dbReference type="EC" id="6.1.1.14"/>
    </reaction>
</comment>
<comment type="subunit">
    <text evidence="1">Tetramer of two alpha and two beta subunits.</text>
</comment>
<comment type="subcellular location">
    <subcellularLocation>
        <location evidence="1">Cytoplasm</location>
    </subcellularLocation>
</comment>
<comment type="similarity">
    <text evidence="1">Belongs to the class-II aminoacyl-tRNA synthetase family.</text>
</comment>
<accession>B1L9T6</accession>
<reference key="1">
    <citation type="journal article" date="2011" name="J. Bacteriol.">
        <title>Genome sequence of Thermotoga sp. strain RQ2, a hyperthermophilic bacterium isolated from a geothermally heated region of the seafloor near Ribeira Quente, the Azores.</title>
        <authorList>
            <person name="Swithers K.S."/>
            <person name="DiPippo J.L."/>
            <person name="Bruce D.C."/>
            <person name="Detter C."/>
            <person name="Tapia R."/>
            <person name="Han S."/>
            <person name="Saunders E."/>
            <person name="Goodwin L.A."/>
            <person name="Han J."/>
            <person name="Woyke T."/>
            <person name="Pitluck S."/>
            <person name="Pennacchio L."/>
            <person name="Nolan M."/>
            <person name="Mikhailova N."/>
            <person name="Lykidis A."/>
            <person name="Land M.L."/>
            <person name="Brettin T."/>
            <person name="Stetter K.O."/>
            <person name="Nelson K.E."/>
            <person name="Gogarten J.P."/>
            <person name="Noll K.M."/>
        </authorList>
    </citation>
    <scope>NUCLEOTIDE SEQUENCE [LARGE SCALE GENOMIC DNA]</scope>
    <source>
        <strain>RQ2</strain>
    </source>
</reference>